<name>ATPE_ENT38</name>
<comment type="function">
    <text evidence="1">Produces ATP from ADP in the presence of a proton gradient across the membrane.</text>
</comment>
<comment type="subunit">
    <text evidence="1">F-type ATPases have 2 components, CF(1) - the catalytic core - and CF(0) - the membrane proton channel. CF(1) has five subunits: alpha(3), beta(3), gamma(1), delta(1), epsilon(1). CF(0) has three main subunits: a, b and c.</text>
</comment>
<comment type="subcellular location">
    <subcellularLocation>
        <location evidence="1">Cell inner membrane</location>
        <topology evidence="1">Peripheral membrane protein</topology>
    </subcellularLocation>
</comment>
<comment type="similarity">
    <text evidence="1">Belongs to the ATPase epsilon chain family.</text>
</comment>
<sequence length="139" mass="15058">MAMTYHLDVVSAEQQMFSGLVEKIQVTGSEGELGIFPGHAPLLTAIKPGMIRIVKQFGHEEFIYLSGGILEVQPGSVTVLADTAIRGQDLDEARALEAKRKAEEHIKSSHGDVDYAQASAELAKAIAKLRVIELTKKAM</sequence>
<accession>A4WGF6</accession>
<proteinExistence type="inferred from homology"/>
<feature type="chain" id="PRO_1000060980" description="ATP synthase epsilon chain">
    <location>
        <begin position="1"/>
        <end position="139"/>
    </location>
</feature>
<gene>
    <name evidence="1" type="primary">atpC</name>
    <name type="ordered locus">Ent638_4133</name>
</gene>
<evidence type="ECO:0000255" key="1">
    <source>
        <dbReference type="HAMAP-Rule" id="MF_00530"/>
    </source>
</evidence>
<dbReference type="EMBL" id="CP000653">
    <property type="protein sequence ID" value="ABP62786.1"/>
    <property type="molecule type" value="Genomic_DNA"/>
</dbReference>
<dbReference type="RefSeq" id="WP_003023809.1">
    <property type="nucleotide sequence ID" value="NC_009436.1"/>
</dbReference>
<dbReference type="SMR" id="A4WGF6"/>
<dbReference type="STRING" id="399742.Ent638_4133"/>
<dbReference type="KEGG" id="ent:Ent638_4133"/>
<dbReference type="eggNOG" id="COG0355">
    <property type="taxonomic scope" value="Bacteria"/>
</dbReference>
<dbReference type="HOGENOM" id="CLU_084338_2_0_6"/>
<dbReference type="OrthoDB" id="9791445at2"/>
<dbReference type="Proteomes" id="UP000000230">
    <property type="component" value="Chromosome"/>
</dbReference>
<dbReference type="GO" id="GO:0005886">
    <property type="term" value="C:plasma membrane"/>
    <property type="evidence" value="ECO:0007669"/>
    <property type="project" value="UniProtKB-SubCell"/>
</dbReference>
<dbReference type="GO" id="GO:0045259">
    <property type="term" value="C:proton-transporting ATP synthase complex"/>
    <property type="evidence" value="ECO:0007669"/>
    <property type="project" value="UniProtKB-KW"/>
</dbReference>
<dbReference type="GO" id="GO:0005524">
    <property type="term" value="F:ATP binding"/>
    <property type="evidence" value="ECO:0007669"/>
    <property type="project" value="UniProtKB-UniRule"/>
</dbReference>
<dbReference type="GO" id="GO:0046933">
    <property type="term" value="F:proton-transporting ATP synthase activity, rotational mechanism"/>
    <property type="evidence" value="ECO:0007669"/>
    <property type="project" value="UniProtKB-UniRule"/>
</dbReference>
<dbReference type="CDD" id="cd12152">
    <property type="entry name" value="F1-ATPase_delta"/>
    <property type="match status" value="1"/>
</dbReference>
<dbReference type="FunFam" id="1.20.5.440:FF:000001">
    <property type="entry name" value="ATP synthase epsilon chain"/>
    <property type="match status" value="1"/>
</dbReference>
<dbReference type="FunFam" id="2.60.15.10:FF:000001">
    <property type="entry name" value="ATP synthase epsilon chain"/>
    <property type="match status" value="1"/>
</dbReference>
<dbReference type="Gene3D" id="1.20.5.440">
    <property type="entry name" value="ATP synthase delta/epsilon subunit, C-terminal domain"/>
    <property type="match status" value="1"/>
</dbReference>
<dbReference type="Gene3D" id="2.60.15.10">
    <property type="entry name" value="F0F1 ATP synthase delta/epsilon subunit, N-terminal"/>
    <property type="match status" value="1"/>
</dbReference>
<dbReference type="HAMAP" id="MF_00530">
    <property type="entry name" value="ATP_synth_epsil_bac"/>
    <property type="match status" value="1"/>
</dbReference>
<dbReference type="InterPro" id="IPR036794">
    <property type="entry name" value="ATP_F1_dsu/esu_C_sf"/>
</dbReference>
<dbReference type="InterPro" id="IPR001469">
    <property type="entry name" value="ATP_synth_F1_dsu/esu"/>
</dbReference>
<dbReference type="InterPro" id="IPR020546">
    <property type="entry name" value="ATP_synth_F1_dsu/esu_N"/>
</dbReference>
<dbReference type="InterPro" id="IPR020547">
    <property type="entry name" value="ATP_synth_F1_esu_C"/>
</dbReference>
<dbReference type="InterPro" id="IPR036771">
    <property type="entry name" value="ATPsynth_dsu/esu_N"/>
</dbReference>
<dbReference type="NCBIfam" id="TIGR01216">
    <property type="entry name" value="ATP_synt_epsi"/>
    <property type="match status" value="1"/>
</dbReference>
<dbReference type="NCBIfam" id="NF001847">
    <property type="entry name" value="PRK00571.1-4"/>
    <property type="match status" value="1"/>
</dbReference>
<dbReference type="PANTHER" id="PTHR13822">
    <property type="entry name" value="ATP SYNTHASE DELTA/EPSILON CHAIN"/>
    <property type="match status" value="1"/>
</dbReference>
<dbReference type="PANTHER" id="PTHR13822:SF10">
    <property type="entry name" value="ATP SYNTHASE EPSILON CHAIN, CHLOROPLASTIC"/>
    <property type="match status" value="1"/>
</dbReference>
<dbReference type="Pfam" id="PF00401">
    <property type="entry name" value="ATP-synt_DE"/>
    <property type="match status" value="1"/>
</dbReference>
<dbReference type="Pfam" id="PF02823">
    <property type="entry name" value="ATP-synt_DE_N"/>
    <property type="match status" value="1"/>
</dbReference>
<dbReference type="SUPFAM" id="SSF46604">
    <property type="entry name" value="Epsilon subunit of F1F0-ATP synthase C-terminal domain"/>
    <property type="match status" value="1"/>
</dbReference>
<dbReference type="SUPFAM" id="SSF51344">
    <property type="entry name" value="Epsilon subunit of F1F0-ATP synthase N-terminal domain"/>
    <property type="match status" value="1"/>
</dbReference>
<keyword id="KW-0066">ATP synthesis</keyword>
<keyword id="KW-0997">Cell inner membrane</keyword>
<keyword id="KW-1003">Cell membrane</keyword>
<keyword id="KW-0139">CF(1)</keyword>
<keyword id="KW-0375">Hydrogen ion transport</keyword>
<keyword id="KW-0406">Ion transport</keyword>
<keyword id="KW-0472">Membrane</keyword>
<keyword id="KW-0813">Transport</keyword>
<organism>
    <name type="scientific">Enterobacter sp. (strain 638)</name>
    <dbReference type="NCBI Taxonomy" id="399742"/>
    <lineage>
        <taxon>Bacteria</taxon>
        <taxon>Pseudomonadati</taxon>
        <taxon>Pseudomonadota</taxon>
        <taxon>Gammaproteobacteria</taxon>
        <taxon>Enterobacterales</taxon>
        <taxon>Enterobacteriaceae</taxon>
        <taxon>Enterobacter</taxon>
    </lineage>
</organism>
<reference key="1">
    <citation type="journal article" date="2010" name="PLoS Genet.">
        <title>Genome sequence of the plant growth promoting endophytic bacterium Enterobacter sp. 638.</title>
        <authorList>
            <person name="Taghavi S."/>
            <person name="van der Lelie D."/>
            <person name="Hoffman A."/>
            <person name="Zhang Y.B."/>
            <person name="Walla M.D."/>
            <person name="Vangronsveld J."/>
            <person name="Newman L."/>
            <person name="Monchy S."/>
        </authorList>
    </citation>
    <scope>NUCLEOTIDE SEQUENCE [LARGE SCALE GENOMIC DNA]</scope>
    <source>
        <strain>638</strain>
    </source>
</reference>
<protein>
    <recommendedName>
        <fullName evidence="1">ATP synthase epsilon chain</fullName>
    </recommendedName>
    <alternativeName>
        <fullName evidence="1">ATP synthase F1 sector epsilon subunit</fullName>
    </alternativeName>
    <alternativeName>
        <fullName evidence="1">F-ATPase epsilon subunit</fullName>
    </alternativeName>
</protein>